<evidence type="ECO:0000255" key="1">
    <source>
        <dbReference type="HAMAP-Rule" id="MF_00176"/>
    </source>
</evidence>
<evidence type="ECO:0000256" key="2">
    <source>
        <dbReference type="SAM" id="MobiDB-lite"/>
    </source>
</evidence>
<proteinExistence type="inferred from homology"/>
<accession>A2C798</accession>
<comment type="function">
    <text evidence="1">Catalyzes the attachment of serine to tRNA(Ser). Is also able to aminoacylate tRNA(Sec) with serine, to form the misacylated tRNA L-seryl-tRNA(Sec), which will be further converted into selenocysteinyl-tRNA(Sec).</text>
</comment>
<comment type="catalytic activity">
    <reaction evidence="1">
        <text>tRNA(Ser) + L-serine + ATP = L-seryl-tRNA(Ser) + AMP + diphosphate + H(+)</text>
        <dbReference type="Rhea" id="RHEA:12292"/>
        <dbReference type="Rhea" id="RHEA-COMP:9669"/>
        <dbReference type="Rhea" id="RHEA-COMP:9703"/>
        <dbReference type="ChEBI" id="CHEBI:15378"/>
        <dbReference type="ChEBI" id="CHEBI:30616"/>
        <dbReference type="ChEBI" id="CHEBI:33019"/>
        <dbReference type="ChEBI" id="CHEBI:33384"/>
        <dbReference type="ChEBI" id="CHEBI:78442"/>
        <dbReference type="ChEBI" id="CHEBI:78533"/>
        <dbReference type="ChEBI" id="CHEBI:456215"/>
        <dbReference type="EC" id="6.1.1.11"/>
    </reaction>
</comment>
<comment type="catalytic activity">
    <reaction evidence="1">
        <text>tRNA(Sec) + L-serine + ATP = L-seryl-tRNA(Sec) + AMP + diphosphate + H(+)</text>
        <dbReference type="Rhea" id="RHEA:42580"/>
        <dbReference type="Rhea" id="RHEA-COMP:9742"/>
        <dbReference type="Rhea" id="RHEA-COMP:10128"/>
        <dbReference type="ChEBI" id="CHEBI:15378"/>
        <dbReference type="ChEBI" id="CHEBI:30616"/>
        <dbReference type="ChEBI" id="CHEBI:33019"/>
        <dbReference type="ChEBI" id="CHEBI:33384"/>
        <dbReference type="ChEBI" id="CHEBI:78442"/>
        <dbReference type="ChEBI" id="CHEBI:78533"/>
        <dbReference type="ChEBI" id="CHEBI:456215"/>
        <dbReference type="EC" id="6.1.1.11"/>
    </reaction>
</comment>
<comment type="pathway">
    <text evidence="1">Aminoacyl-tRNA biosynthesis; selenocysteinyl-tRNA(Sec) biosynthesis; L-seryl-tRNA(Sec) from L-serine and tRNA(Sec): step 1/1.</text>
</comment>
<comment type="subunit">
    <text evidence="1">Homodimer. The tRNA molecule binds across the dimer.</text>
</comment>
<comment type="subcellular location">
    <subcellularLocation>
        <location evidence="1">Cytoplasm</location>
    </subcellularLocation>
</comment>
<comment type="domain">
    <text evidence="1">Consists of two distinct domains, a catalytic core and a N-terminal extension that is involved in tRNA binding.</text>
</comment>
<comment type="similarity">
    <text evidence="1">Belongs to the class-II aminoacyl-tRNA synthetase family. Type-1 seryl-tRNA synthetase subfamily.</text>
</comment>
<name>SYS_PROM3</name>
<gene>
    <name evidence="1" type="primary">serS</name>
    <name type="ordered locus">P9303_06061</name>
</gene>
<reference key="1">
    <citation type="journal article" date="2007" name="PLoS Genet.">
        <title>Patterns and implications of gene gain and loss in the evolution of Prochlorococcus.</title>
        <authorList>
            <person name="Kettler G.C."/>
            <person name="Martiny A.C."/>
            <person name="Huang K."/>
            <person name="Zucker J."/>
            <person name="Coleman M.L."/>
            <person name="Rodrigue S."/>
            <person name="Chen F."/>
            <person name="Lapidus A."/>
            <person name="Ferriera S."/>
            <person name="Johnson J."/>
            <person name="Steglich C."/>
            <person name="Church G.M."/>
            <person name="Richardson P."/>
            <person name="Chisholm S.W."/>
        </authorList>
    </citation>
    <scope>NUCLEOTIDE SEQUENCE [LARGE SCALE GENOMIC DNA]</scope>
    <source>
        <strain>MIT 9303</strain>
    </source>
</reference>
<organism>
    <name type="scientific">Prochlorococcus marinus (strain MIT 9303)</name>
    <dbReference type="NCBI Taxonomy" id="59922"/>
    <lineage>
        <taxon>Bacteria</taxon>
        <taxon>Bacillati</taxon>
        <taxon>Cyanobacteriota</taxon>
        <taxon>Cyanophyceae</taxon>
        <taxon>Synechococcales</taxon>
        <taxon>Prochlorococcaceae</taxon>
        <taxon>Prochlorococcus</taxon>
    </lineage>
</organism>
<keyword id="KW-0030">Aminoacyl-tRNA synthetase</keyword>
<keyword id="KW-0067">ATP-binding</keyword>
<keyword id="KW-0963">Cytoplasm</keyword>
<keyword id="KW-0436">Ligase</keyword>
<keyword id="KW-0547">Nucleotide-binding</keyword>
<keyword id="KW-0648">Protein biosynthesis</keyword>
<feature type="chain" id="PRO_1000019766" description="Serine--tRNA ligase">
    <location>
        <begin position="1"/>
        <end position="425"/>
    </location>
</feature>
<feature type="region of interest" description="Disordered" evidence="2">
    <location>
        <begin position="43"/>
        <end position="68"/>
    </location>
</feature>
<feature type="region of interest" description="Disordered" evidence="2">
    <location>
        <begin position="108"/>
        <end position="131"/>
    </location>
</feature>
<feature type="compositionally biased region" description="Basic and acidic residues" evidence="2">
    <location>
        <begin position="117"/>
        <end position="131"/>
    </location>
</feature>
<feature type="binding site" evidence="1">
    <location>
        <begin position="233"/>
        <end position="235"/>
    </location>
    <ligand>
        <name>L-serine</name>
        <dbReference type="ChEBI" id="CHEBI:33384"/>
    </ligand>
</feature>
<feature type="binding site" evidence="1">
    <location>
        <begin position="264"/>
        <end position="266"/>
    </location>
    <ligand>
        <name>ATP</name>
        <dbReference type="ChEBI" id="CHEBI:30616"/>
    </ligand>
</feature>
<feature type="binding site" evidence="1">
    <location>
        <position position="287"/>
    </location>
    <ligand>
        <name>L-serine</name>
        <dbReference type="ChEBI" id="CHEBI:33384"/>
    </ligand>
</feature>
<feature type="binding site" evidence="1">
    <location>
        <begin position="351"/>
        <end position="354"/>
    </location>
    <ligand>
        <name>ATP</name>
        <dbReference type="ChEBI" id="CHEBI:30616"/>
    </ligand>
</feature>
<feature type="binding site" evidence="1">
    <location>
        <position position="385"/>
    </location>
    <ligand>
        <name>L-serine</name>
        <dbReference type="ChEBI" id="CHEBI:33384"/>
    </ligand>
</feature>
<sequence length="425" mass="47684">MLDQRLVRDNPDLIANELGRRGMTLDLTGLQLIAQQQRNLEEQRSSLQAEGNRIGKEVGQRIQQGSDPKASDVAELRHQGNLIKQKVAVLEDEEKQLSARLREQLLSLPNLPSPDCPEGRDENDNQERHCWGKPREGKDLLEHWSIAERLNLFETERSVRIAQSRFVTLMGQGARLERALINFMLDLHTSKGYREVMPPVLVNTASLTGSGQLPKFAEESFRCAEDDLWLTPTAEVPVTSLHRDEIIPADQLPLRYAAYSPCFRREAGSYGRDTRGLIRLHQFNKVELYWFVHPDHSQAAHAQITADAEAVLQALELPYRVIELCTGDLGFSSSRTYDLEVWLPGAGAFREISSCSICGDFQARRSAIRTKDQKGTRLIHTLNGSGLAVGRTMAALLETGQQSDGSVLLPKALVPYFGKDRLEPE</sequence>
<protein>
    <recommendedName>
        <fullName evidence="1">Serine--tRNA ligase</fullName>
        <ecNumber evidence="1">6.1.1.11</ecNumber>
    </recommendedName>
    <alternativeName>
        <fullName evidence="1">Seryl-tRNA synthetase</fullName>
        <shortName evidence="1">SerRS</shortName>
    </alternativeName>
    <alternativeName>
        <fullName evidence="1">Seryl-tRNA(Ser/Sec) synthetase</fullName>
    </alternativeName>
</protein>
<dbReference type="EC" id="6.1.1.11" evidence="1"/>
<dbReference type="EMBL" id="CP000554">
    <property type="protein sequence ID" value="ABM77358.1"/>
    <property type="molecule type" value="Genomic_DNA"/>
</dbReference>
<dbReference type="RefSeq" id="WP_011825278.1">
    <property type="nucleotide sequence ID" value="NC_008820.1"/>
</dbReference>
<dbReference type="SMR" id="A2C798"/>
<dbReference type="STRING" id="59922.P9303_06061"/>
<dbReference type="KEGG" id="pmf:P9303_06061"/>
<dbReference type="HOGENOM" id="CLU_023797_1_1_3"/>
<dbReference type="BioCyc" id="PMAR59922:G1G80-556-MONOMER"/>
<dbReference type="UniPathway" id="UPA00906">
    <property type="reaction ID" value="UER00895"/>
</dbReference>
<dbReference type="Proteomes" id="UP000002274">
    <property type="component" value="Chromosome"/>
</dbReference>
<dbReference type="GO" id="GO:0005737">
    <property type="term" value="C:cytoplasm"/>
    <property type="evidence" value="ECO:0007669"/>
    <property type="project" value="UniProtKB-SubCell"/>
</dbReference>
<dbReference type="GO" id="GO:0005524">
    <property type="term" value="F:ATP binding"/>
    <property type="evidence" value="ECO:0007669"/>
    <property type="project" value="UniProtKB-UniRule"/>
</dbReference>
<dbReference type="GO" id="GO:0004828">
    <property type="term" value="F:serine-tRNA ligase activity"/>
    <property type="evidence" value="ECO:0007669"/>
    <property type="project" value="UniProtKB-UniRule"/>
</dbReference>
<dbReference type="GO" id="GO:0016260">
    <property type="term" value="P:selenocysteine biosynthetic process"/>
    <property type="evidence" value="ECO:0007669"/>
    <property type="project" value="UniProtKB-UniRule"/>
</dbReference>
<dbReference type="GO" id="GO:0006434">
    <property type="term" value="P:seryl-tRNA aminoacylation"/>
    <property type="evidence" value="ECO:0007669"/>
    <property type="project" value="UniProtKB-UniRule"/>
</dbReference>
<dbReference type="CDD" id="cd00770">
    <property type="entry name" value="SerRS_core"/>
    <property type="match status" value="1"/>
</dbReference>
<dbReference type="Gene3D" id="3.30.930.10">
    <property type="entry name" value="Bira Bifunctional Protein, Domain 2"/>
    <property type="match status" value="1"/>
</dbReference>
<dbReference type="Gene3D" id="1.10.287.40">
    <property type="entry name" value="Serine-tRNA synthetase, tRNA binding domain"/>
    <property type="match status" value="1"/>
</dbReference>
<dbReference type="HAMAP" id="MF_00176">
    <property type="entry name" value="Ser_tRNA_synth_type1"/>
    <property type="match status" value="1"/>
</dbReference>
<dbReference type="InterPro" id="IPR002314">
    <property type="entry name" value="aa-tRNA-synt_IIb"/>
</dbReference>
<dbReference type="InterPro" id="IPR006195">
    <property type="entry name" value="aa-tRNA-synth_II"/>
</dbReference>
<dbReference type="InterPro" id="IPR045864">
    <property type="entry name" value="aa-tRNA-synth_II/BPL/LPL"/>
</dbReference>
<dbReference type="InterPro" id="IPR002317">
    <property type="entry name" value="Ser-tRNA-ligase_type_1"/>
</dbReference>
<dbReference type="InterPro" id="IPR015866">
    <property type="entry name" value="Ser-tRNA-synth_1_N"/>
</dbReference>
<dbReference type="InterPro" id="IPR042103">
    <property type="entry name" value="SerRS_1_N_sf"/>
</dbReference>
<dbReference type="InterPro" id="IPR033729">
    <property type="entry name" value="SerRS_core"/>
</dbReference>
<dbReference type="InterPro" id="IPR010978">
    <property type="entry name" value="tRNA-bd_arm"/>
</dbReference>
<dbReference type="NCBIfam" id="TIGR00414">
    <property type="entry name" value="serS"/>
    <property type="match status" value="1"/>
</dbReference>
<dbReference type="PANTHER" id="PTHR43697:SF1">
    <property type="entry name" value="SERINE--TRNA LIGASE"/>
    <property type="match status" value="1"/>
</dbReference>
<dbReference type="PANTHER" id="PTHR43697">
    <property type="entry name" value="SERYL-TRNA SYNTHETASE"/>
    <property type="match status" value="1"/>
</dbReference>
<dbReference type="Pfam" id="PF02403">
    <property type="entry name" value="Seryl_tRNA_N"/>
    <property type="match status" value="1"/>
</dbReference>
<dbReference type="Pfam" id="PF00587">
    <property type="entry name" value="tRNA-synt_2b"/>
    <property type="match status" value="1"/>
</dbReference>
<dbReference type="PIRSF" id="PIRSF001529">
    <property type="entry name" value="Ser-tRNA-synth_IIa"/>
    <property type="match status" value="1"/>
</dbReference>
<dbReference type="PRINTS" id="PR00981">
    <property type="entry name" value="TRNASYNTHSER"/>
</dbReference>
<dbReference type="SUPFAM" id="SSF55681">
    <property type="entry name" value="Class II aaRS and biotin synthetases"/>
    <property type="match status" value="1"/>
</dbReference>
<dbReference type="SUPFAM" id="SSF46589">
    <property type="entry name" value="tRNA-binding arm"/>
    <property type="match status" value="1"/>
</dbReference>
<dbReference type="PROSITE" id="PS50862">
    <property type="entry name" value="AA_TRNA_LIGASE_II"/>
    <property type="match status" value="1"/>
</dbReference>